<reference key="1">
    <citation type="journal article" date="1996" name="Genetics">
        <title>Recombination-dependent growth in exonuclease-depleted recBC sbcBC strains of Escherichia coli K-12.</title>
        <authorList>
            <person name="Ryder L."/>
            <person name="Sharples G.J."/>
            <person name="Lloyd R.G."/>
        </authorList>
    </citation>
    <scope>NUCLEOTIDE SEQUENCE [GENOMIC DNA]</scope>
    <scope>FUNCTION</scope>
    <source>
        <strain>K12</strain>
    </source>
</reference>
<reference key="2">
    <citation type="submission" date="1997-01" db="EMBL/GenBank/DDBJ databases">
        <title>Sequence of minutes 4-25 of Escherichia coli.</title>
        <authorList>
            <person name="Chung E."/>
            <person name="Allen E."/>
            <person name="Araujo R."/>
            <person name="Aparicio A.M."/>
            <person name="Davis K."/>
            <person name="Duncan M."/>
            <person name="Federspiel N."/>
            <person name="Hyman R."/>
            <person name="Kalman S."/>
            <person name="Komp C."/>
            <person name="Kurdi O."/>
            <person name="Lew H."/>
            <person name="Lin D."/>
            <person name="Namath A."/>
            <person name="Oefner P."/>
            <person name="Roberts D."/>
            <person name="Schramm S."/>
            <person name="Davis R.W."/>
        </authorList>
    </citation>
    <scope>NUCLEOTIDE SEQUENCE [LARGE SCALE GENOMIC DNA]</scope>
    <source>
        <strain>K12 / MG1655 / ATCC 47076</strain>
    </source>
</reference>
<reference key="3">
    <citation type="journal article" date="1997" name="Science">
        <title>The complete genome sequence of Escherichia coli K-12.</title>
        <authorList>
            <person name="Blattner F.R."/>
            <person name="Plunkett G. III"/>
            <person name="Bloch C.A."/>
            <person name="Perna N.T."/>
            <person name="Burland V."/>
            <person name="Riley M."/>
            <person name="Collado-Vides J."/>
            <person name="Glasner J.D."/>
            <person name="Rode C.K."/>
            <person name="Mayhew G.F."/>
            <person name="Gregor J."/>
            <person name="Davis N.W."/>
            <person name="Kirkpatrick H.A."/>
            <person name="Goeden M.A."/>
            <person name="Rose D.J."/>
            <person name="Mau B."/>
            <person name="Shao Y."/>
        </authorList>
    </citation>
    <scope>NUCLEOTIDE SEQUENCE [LARGE SCALE GENOMIC DNA]</scope>
    <source>
        <strain>K12 / MG1655 / ATCC 47076</strain>
    </source>
</reference>
<reference key="4">
    <citation type="journal article" date="2006" name="Mol. Syst. Biol.">
        <title>Highly accurate genome sequences of Escherichia coli K-12 strains MG1655 and W3110.</title>
        <authorList>
            <person name="Hayashi K."/>
            <person name="Morooka N."/>
            <person name="Yamamoto Y."/>
            <person name="Fujita K."/>
            <person name="Isono K."/>
            <person name="Choi S."/>
            <person name="Ohtsubo E."/>
            <person name="Baba T."/>
            <person name="Wanner B.L."/>
            <person name="Mori H."/>
            <person name="Horiuchi T."/>
        </authorList>
    </citation>
    <scope>NUCLEOTIDE SEQUENCE [LARGE SCALE GENOMIC DNA]</scope>
    <source>
        <strain>K12 / W3110 / ATCC 27325 / DSM 5911</strain>
    </source>
</reference>
<reference key="5">
    <citation type="journal article" date="1999" name="J. Bacteriol.">
        <title>Identification of two new proteins in spermidine nucleoids isolated from Escherichia coli.</title>
        <authorList>
            <person name="Murphy L.D."/>
            <person name="Rosner J.L."/>
            <person name="Zimmerman S.B."/>
            <person name="Esposito D."/>
        </authorList>
    </citation>
    <scope>PROTEIN SEQUENCE OF 1-15</scope>
</reference>
<reference key="6">
    <citation type="journal article" date="2022" name="G3 (Bethesda)">
        <title>Identification of genetic interactions with priB links the PriA/PriB DNA replication restart pathway to double-strand DNA break repair in Escherichia coli.</title>
        <authorList>
            <person name="McKenzie A.M."/>
            <person name="Henry C."/>
            <person name="Myers K.S."/>
            <person name="Place M.M."/>
            <person name="Keck J.L."/>
        </authorList>
    </citation>
    <scope>GENETIC INTERACTION</scope>
    <scope>DISRUPTION PHENOTYPE</scope>
    <source>
        <strain>K12 / MG1655 / ATCC 47076</strain>
    </source>
</reference>
<feature type="chain" id="PRO_0000211737" description="Recombination-associated protein RdgC">
    <location>
        <begin position="1"/>
        <end position="303"/>
    </location>
</feature>
<feature type="strand" evidence="5">
    <location>
        <begin position="5"/>
        <end position="14"/>
    </location>
</feature>
<feature type="helix" evidence="5">
    <location>
        <begin position="20"/>
        <end position="28"/>
    </location>
</feature>
<feature type="strand" evidence="5">
    <location>
        <begin position="40"/>
        <end position="46"/>
    </location>
</feature>
<feature type="helix" evidence="5">
    <location>
        <begin position="50"/>
        <end position="52"/>
    </location>
</feature>
<feature type="strand" evidence="5">
    <location>
        <begin position="56"/>
        <end position="74"/>
    </location>
</feature>
<feature type="helix" evidence="5">
    <location>
        <begin position="77"/>
        <end position="92"/>
    </location>
</feature>
<feature type="strand" evidence="5">
    <location>
        <begin position="101"/>
        <end position="103"/>
    </location>
</feature>
<feature type="helix" evidence="5">
    <location>
        <begin position="106"/>
        <end position="115"/>
    </location>
</feature>
<feature type="turn" evidence="5">
    <location>
        <begin position="116"/>
        <end position="118"/>
    </location>
</feature>
<feature type="strand" evidence="5">
    <location>
        <begin position="120"/>
        <end position="131"/>
    </location>
</feature>
<feature type="turn" evidence="5">
    <location>
        <begin position="132"/>
        <end position="135"/>
    </location>
</feature>
<feature type="strand" evidence="5">
    <location>
        <begin position="136"/>
        <end position="139"/>
    </location>
</feature>
<feature type="helix" evidence="5">
    <location>
        <begin position="144"/>
        <end position="158"/>
    </location>
</feature>
<feature type="strand" evidence="5">
    <location>
        <begin position="163"/>
        <end position="165"/>
    </location>
</feature>
<feature type="strand" evidence="5">
    <location>
        <begin position="168"/>
        <end position="170"/>
    </location>
</feature>
<feature type="helix" evidence="5">
    <location>
        <begin position="172"/>
        <end position="182"/>
    </location>
</feature>
<feature type="strand" evidence="5">
    <location>
        <begin position="189"/>
        <end position="198"/>
    </location>
</feature>
<feature type="strand" evidence="5">
    <location>
        <begin position="206"/>
        <end position="211"/>
    </location>
</feature>
<feature type="strand" evidence="5">
    <location>
        <begin position="214"/>
        <end position="216"/>
    </location>
</feature>
<feature type="helix" evidence="5">
    <location>
        <begin position="217"/>
        <end position="224"/>
    </location>
</feature>
<feature type="strand" evidence="5">
    <location>
        <begin position="228"/>
        <end position="236"/>
    </location>
</feature>
<feature type="turn" evidence="5">
    <location>
        <begin position="237"/>
        <end position="239"/>
    </location>
</feature>
<feature type="strand" evidence="5">
    <location>
        <begin position="240"/>
        <end position="245"/>
    </location>
</feature>
<feature type="strand" evidence="5">
    <location>
        <begin position="250"/>
        <end position="255"/>
    </location>
</feature>
<feature type="helix" evidence="5">
    <location>
        <begin position="257"/>
        <end position="260"/>
    </location>
</feature>
<feature type="turn" evidence="5">
    <location>
        <begin position="262"/>
        <end position="265"/>
    </location>
</feature>
<feature type="helix" evidence="5">
    <location>
        <begin position="271"/>
        <end position="296"/>
    </location>
</feature>
<keyword id="KW-0002">3D-structure</keyword>
<keyword id="KW-0963">Cytoplasm</keyword>
<keyword id="KW-0903">Direct protein sequencing</keyword>
<keyword id="KW-0233">DNA recombination</keyword>
<keyword id="KW-1185">Reference proteome</keyword>
<proteinExistence type="evidence at protein level"/>
<sequence>MLWFKNLMVYRLSREISLRAEEMEKQLASMAFTPCGSQDMAKMGWVPPMGSHSDALTHVANGQIVICARKEEKILPSPVIKQALEAKIAKLEAEQARKLKKTEKDSLKDEVLHSLLPRAFSRFSQTMMWIDTVNGLIMVDCASAKKAEDTLALLRKSLGSLPVVPLSMENPIELTLTEWVRSGSAAQGFQLLDEAELKSLLEDGGVIRAKKQDLTSEEITNHIEAGKVVTKLALDWQQRIQFVMCDDGSLKRLKFCDELRDQNEDIDREDFAQRFDADFILMTGELAALIQNLIEGLGGEAQR</sequence>
<protein>
    <recommendedName>
        <fullName>Recombination-associated protein RdgC</fullName>
    </recommendedName>
</protein>
<dbReference type="EMBL" id="X76979">
    <property type="protein sequence ID" value="CAA54285.1"/>
    <property type="molecule type" value="Genomic_DNA"/>
</dbReference>
<dbReference type="EMBL" id="U73857">
    <property type="protein sequence ID" value="AAB18117.1"/>
    <property type="molecule type" value="Genomic_DNA"/>
</dbReference>
<dbReference type="EMBL" id="U00096">
    <property type="protein sequence ID" value="AAC73496.1"/>
    <property type="molecule type" value="Genomic_DNA"/>
</dbReference>
<dbReference type="EMBL" id="AP009048">
    <property type="protein sequence ID" value="BAE76174.1"/>
    <property type="molecule type" value="Genomic_DNA"/>
</dbReference>
<dbReference type="PIR" id="S41303">
    <property type="entry name" value="S41303"/>
</dbReference>
<dbReference type="RefSeq" id="NP_414927.1">
    <property type="nucleotide sequence ID" value="NC_000913.3"/>
</dbReference>
<dbReference type="RefSeq" id="WP_001298537.1">
    <property type="nucleotide sequence ID" value="NZ_STEB01000007.1"/>
</dbReference>
<dbReference type="PDB" id="2OWL">
    <property type="method" value="X-ray"/>
    <property type="resolution" value="2.40 A"/>
    <property type="chains" value="A/B=1-303"/>
</dbReference>
<dbReference type="PDBsum" id="2OWL"/>
<dbReference type="SMR" id="P36767"/>
<dbReference type="BioGRID" id="4263190">
    <property type="interactions" value="137"/>
</dbReference>
<dbReference type="DIP" id="DIP-10649N"/>
<dbReference type="FunCoup" id="P36767">
    <property type="interactions" value="146"/>
</dbReference>
<dbReference type="IntAct" id="P36767">
    <property type="interactions" value="6"/>
</dbReference>
<dbReference type="STRING" id="511145.b0393"/>
<dbReference type="jPOST" id="P36767"/>
<dbReference type="PaxDb" id="511145-b0393"/>
<dbReference type="EnsemblBacteria" id="AAC73496">
    <property type="protein sequence ID" value="AAC73496"/>
    <property type="gene ID" value="b0393"/>
</dbReference>
<dbReference type="GeneID" id="75202816"/>
<dbReference type="GeneID" id="948585"/>
<dbReference type="KEGG" id="ecj:JW0384"/>
<dbReference type="KEGG" id="eco:b0393"/>
<dbReference type="KEGG" id="ecoc:C3026_01915"/>
<dbReference type="PATRIC" id="fig|511145.12.peg.406"/>
<dbReference type="EchoBASE" id="EB2078"/>
<dbReference type="eggNOG" id="COG2974">
    <property type="taxonomic scope" value="Bacteria"/>
</dbReference>
<dbReference type="HOGENOM" id="CLU_052038_1_1_6"/>
<dbReference type="InParanoid" id="P36767"/>
<dbReference type="OMA" id="TGWVPPM"/>
<dbReference type="OrthoDB" id="5290530at2"/>
<dbReference type="PhylomeDB" id="P36767"/>
<dbReference type="BioCyc" id="EcoCyc:EG12158-MONOMER"/>
<dbReference type="EvolutionaryTrace" id="P36767"/>
<dbReference type="PRO" id="PR:P36767"/>
<dbReference type="Proteomes" id="UP000000625">
    <property type="component" value="Chromosome"/>
</dbReference>
<dbReference type="GO" id="GO:0043590">
    <property type="term" value="C:bacterial nucleoid"/>
    <property type="evidence" value="ECO:0000314"/>
    <property type="project" value="EcoCyc"/>
</dbReference>
<dbReference type="GO" id="GO:0005829">
    <property type="term" value="C:cytosol"/>
    <property type="evidence" value="ECO:0000314"/>
    <property type="project" value="EcoCyc"/>
</dbReference>
<dbReference type="GO" id="GO:0003690">
    <property type="term" value="F:double-stranded DNA binding"/>
    <property type="evidence" value="ECO:0000314"/>
    <property type="project" value="EcoCyc"/>
</dbReference>
<dbReference type="GO" id="GO:0003697">
    <property type="term" value="F:single-stranded DNA binding"/>
    <property type="evidence" value="ECO:0000314"/>
    <property type="project" value="EcoCyc"/>
</dbReference>
<dbReference type="GO" id="GO:0006310">
    <property type="term" value="P:DNA recombination"/>
    <property type="evidence" value="ECO:0007669"/>
    <property type="project" value="UniProtKB-UniRule"/>
</dbReference>
<dbReference type="GO" id="GO:0000018">
    <property type="term" value="P:regulation of DNA recombination"/>
    <property type="evidence" value="ECO:0000314"/>
    <property type="project" value="EcoCyc"/>
</dbReference>
<dbReference type="HAMAP" id="MF_00194">
    <property type="entry name" value="RdgC"/>
    <property type="match status" value="1"/>
</dbReference>
<dbReference type="InterPro" id="IPR007476">
    <property type="entry name" value="RdgC"/>
</dbReference>
<dbReference type="NCBIfam" id="NF001460">
    <property type="entry name" value="PRK00321.1-1"/>
    <property type="match status" value="1"/>
</dbReference>
<dbReference type="NCBIfam" id="NF001462">
    <property type="entry name" value="PRK00321.1-3"/>
    <property type="match status" value="1"/>
</dbReference>
<dbReference type="NCBIfam" id="NF001464">
    <property type="entry name" value="PRK00321.1-5"/>
    <property type="match status" value="1"/>
</dbReference>
<dbReference type="PANTHER" id="PTHR38103">
    <property type="entry name" value="RECOMBINATION-ASSOCIATED PROTEIN RDGC"/>
    <property type="match status" value="1"/>
</dbReference>
<dbReference type="PANTHER" id="PTHR38103:SF1">
    <property type="entry name" value="RECOMBINATION-ASSOCIATED PROTEIN RDGC"/>
    <property type="match status" value="1"/>
</dbReference>
<dbReference type="Pfam" id="PF04381">
    <property type="entry name" value="RdgC"/>
    <property type="match status" value="1"/>
</dbReference>
<name>RDGC_ECOLI</name>
<gene>
    <name evidence="3" type="primary">rdgC</name>
    <name type="synonym">yaiD</name>
    <name type="ordered locus">b0393</name>
    <name type="ordered locus">JW0384</name>
</gene>
<organism>
    <name type="scientific">Escherichia coli (strain K12)</name>
    <dbReference type="NCBI Taxonomy" id="83333"/>
    <lineage>
        <taxon>Bacteria</taxon>
        <taxon>Pseudomonadati</taxon>
        <taxon>Pseudomonadota</taxon>
        <taxon>Gammaproteobacteria</taxon>
        <taxon>Enterobacterales</taxon>
        <taxon>Enterobacteriaceae</taxon>
        <taxon>Escherichia</taxon>
    </lineage>
</organism>
<accession>P36767</accession>
<accession>Q2MC32</accession>
<evidence type="ECO:0000269" key="1">
    <source>
    </source>
</evidence>
<evidence type="ECO:0000269" key="2">
    <source>
    </source>
</evidence>
<evidence type="ECO:0000303" key="3">
    <source>
    </source>
</evidence>
<evidence type="ECO:0000305" key="4"/>
<evidence type="ECO:0007829" key="5">
    <source>
        <dbReference type="PDB" id="2OWL"/>
    </source>
</evidence>
<comment type="function">
    <text evidence="1 2">May be involved in recombination (PubMed:8807285). Genetic interactions among priB, dam, lexA, nagC, polA, rdgB, rdgB, rep and uup link the PriA-PriB replication restart pathway to DNA double-strand break repair (PubMed:36326440).</text>
</comment>
<comment type="subcellular location">
    <subcellularLocation>
        <location>Cytoplasm</location>
        <location>Nucleoid</location>
    </subcellularLocation>
</comment>
<comment type="disruption phenotype">
    <text evidence="1">A double deletion with priB is disadvantageous to cells, which accumulate DNA double-strand breaks.</text>
</comment>
<comment type="similarity">
    <text evidence="4">Belongs to the RdgC family.</text>
</comment>